<proteinExistence type="evidence at protein level"/>
<sequence>MNANDNVVIVGTGLAGVEVAFGLRASGWEGNIRLVGDATVIPHHLPPLSKAYLAGKATAESLYLRTPDAYAAQNIQLLGGTQVTAINRDRQQVILSDGRALDYDRLVLATGGRPRPLPVASGAVGKANNFRYLRTLEDAECIRRQLIADNRLVVIGGGYIGLEVAATAIKANMHVTLLDTAARVLERVTAPPVSAFYEHLHREAGVDIRTGTQVCGFEMSTDQQKVTAVLCEDGTRLPADLVIAGIGLIPNCELASAAGLQVDNGIVINEHMQTSDPLIMAVGDCARFHSQLYDRWVRIESVPNALEQARKIAAILCGKVPRDEAAPWFWSDQYEIGLKMVGLSEGYDRIIVRGSLAQPDFSVFYLQGDRVLAVDTVNRPVEFNQSKQIITDRLPVEPNLLGDESVPLKEIIAAAKAELSSA</sequence>
<accession>P16640</accession>
<keyword id="KW-0002">3D-structure</keyword>
<keyword id="KW-0274">FAD</keyword>
<keyword id="KW-0285">Flavoprotein</keyword>
<keyword id="KW-0520">NAD</keyword>
<keyword id="KW-0560">Oxidoreductase</keyword>
<protein>
    <recommendedName>
        <fullName evidence="8">Putidaredoxin reductase CamA</fullName>
        <shortName evidence="6">Pdr</shortName>
        <ecNumber evidence="2">1.18.1.5</ecNumber>
    </recommendedName>
    <alternativeName>
        <fullName evidence="7">Putidaredoxin--NAD(+) reductase</fullName>
    </alternativeName>
</protein>
<comment type="function">
    <text evidence="2">The oxidation of camphor by cytochrome P450-CAM CamC requires the participation of the flavoprotein, putidaredoxin reductase CamA, and the iron-sulfur protein, putidaredoxin CamB, to mediate the transfer of electrons from NADH to P450 for oxygen activation.</text>
</comment>
<comment type="catalytic activity">
    <reaction evidence="2">
        <text>2 reduced [2Fe-2S]-[putidaredoxin] + NAD(+) + H(+) = 2 oxidized [2Fe-2S]-[putidaredoxin] + NADH</text>
        <dbReference type="Rhea" id="RHEA:33063"/>
        <dbReference type="Rhea" id="RHEA-COMP:14157"/>
        <dbReference type="Rhea" id="RHEA-COMP:14158"/>
        <dbReference type="ChEBI" id="CHEBI:15378"/>
        <dbReference type="ChEBI" id="CHEBI:33737"/>
        <dbReference type="ChEBI" id="CHEBI:33738"/>
        <dbReference type="ChEBI" id="CHEBI:57540"/>
        <dbReference type="ChEBI" id="CHEBI:57945"/>
        <dbReference type="EC" id="1.18.1.5"/>
    </reaction>
</comment>
<comment type="cofactor">
    <cofactor evidence="2 3 4">
        <name>FAD</name>
        <dbReference type="ChEBI" id="CHEBI:57692"/>
    </cofactor>
</comment>
<comment type="pathway">
    <text>Terpene metabolism; (R)-camphor degradation.</text>
</comment>
<comment type="subunit">
    <text evidence="3">Homodimer or monomer.</text>
</comment>
<comment type="induction">
    <text evidence="5">Induced by camphor and repressed by CamR.</text>
</comment>
<comment type="similarity">
    <text evidence="9">Belongs to the FAD-dependent oxidoreductase family.</text>
</comment>
<name>CAMA_PSEPU</name>
<organism>
    <name type="scientific">Pseudomonas putida</name>
    <name type="common">Arthrobacter siderocapsulatus</name>
    <dbReference type="NCBI Taxonomy" id="303"/>
    <lineage>
        <taxon>Bacteria</taxon>
        <taxon>Pseudomonadati</taxon>
        <taxon>Pseudomonadota</taxon>
        <taxon>Gammaproteobacteria</taxon>
        <taxon>Pseudomonadales</taxon>
        <taxon>Pseudomonadaceae</taxon>
        <taxon>Pseudomonas</taxon>
    </lineage>
</organism>
<gene>
    <name evidence="8" type="primary">camA</name>
</gene>
<evidence type="ECO:0000255" key="1"/>
<evidence type="ECO:0000269" key="2">
    <source>
    </source>
</evidence>
<evidence type="ECO:0000269" key="3">
    <source>
    </source>
</evidence>
<evidence type="ECO:0000269" key="4">
    <source>
    </source>
</evidence>
<evidence type="ECO:0000269" key="5">
    <source>
    </source>
</evidence>
<evidence type="ECO:0000303" key="6">
    <source>
    </source>
</evidence>
<evidence type="ECO:0000303" key="7">
    <source>
    </source>
</evidence>
<evidence type="ECO:0000303" key="8">
    <source>
    </source>
</evidence>
<evidence type="ECO:0000305" key="9"/>
<evidence type="ECO:0007744" key="10">
    <source>
        <dbReference type="PDB" id="1Q1R"/>
    </source>
</evidence>
<evidence type="ECO:0007744" key="11">
    <source>
        <dbReference type="PDB" id="1Q1W"/>
    </source>
</evidence>
<evidence type="ECO:0007744" key="12">
    <source>
        <dbReference type="PDB" id="3LB8"/>
    </source>
</evidence>
<evidence type="ECO:0007829" key="13">
    <source>
        <dbReference type="PDB" id="1Q1R"/>
    </source>
</evidence>
<reference key="1">
    <citation type="journal article" date="1989" name="J. Biochem.">
        <title>Cloning and nucleotide sequences of NADH-putidaredoxin reductase gene (camA) and putidaredoxin gene (camB) involved in cytochrome P-450cam hydroxylase of Pseudomonas putida.</title>
        <authorList>
            <person name="Koga H."/>
            <person name="Yamaguchi E."/>
            <person name="Matsunaga K."/>
            <person name="Aramaki H."/>
            <person name="Horiuchi T."/>
        </authorList>
    </citation>
    <scope>NUCLEOTIDE SEQUENCE [GENOMIC DNA]</scope>
    <scope>INDUCTION</scope>
    <source>
        <strain>G1 / ATCC 17453</strain>
    </source>
</reference>
<reference key="2">
    <citation type="journal article" date="1990" name="J. Biol. Chem.">
        <title>Putidaredoxin reductase and putidaredoxin. Cloning, sequence determination, and heterologous expression of the proteins.</title>
        <authorList>
            <person name="Peterson J.A."/>
            <person name="Lorence M.C."/>
            <person name="Amarneh B."/>
        </authorList>
    </citation>
    <scope>NUCLEOTIDE SEQUENCE [GENOMIC DNA]</scope>
    <source>
        <strain>G1 / ATCC 17453</strain>
    </source>
</reference>
<reference key="3">
    <citation type="journal article" date="1986" name="J. Biol. Chem.">
        <title>Nucleotide sequence of the Pseudomonas putida cytochrome P-450cam gene and its expression in Escherichia coli.</title>
        <authorList>
            <person name="Unger B.P."/>
            <person name="Gunsalus I.C."/>
            <person name="Sligar S.G."/>
        </authorList>
    </citation>
    <scope>NUCLEOTIDE SEQUENCE [GENOMIC DNA] OF 1-51</scope>
</reference>
<reference key="4">
    <citation type="journal article" date="2002" name="J. Biol. Chem.">
        <title>Putidaredoxin reductase, a new function for an old protein.</title>
        <authorList>
            <person name="Sevrioukova I.F."/>
            <person name="Poulos T.L."/>
        </authorList>
    </citation>
    <scope>CATALYTIC ACTIVITY</scope>
    <scope>COFACTOR</scope>
    <scope>FUNCTION</scope>
</reference>
<reference key="5">
    <citation type="journal article" date="2001" name="Biochemistry">
        <title>Laser flash induced electron transfer in P450cam monooxygenase: putidaredoxin reductase-putidaredoxin interaction.</title>
        <authorList>
            <person name="Sevrioukova I.F."/>
            <person name="Hazzard J.T."/>
            <person name="Tollin G."/>
            <person name="Poulos T.L."/>
        </authorList>
    </citation>
    <scope>INTERACTION WITH PUTIDAREDOXIN CAMB</scope>
</reference>
<reference key="6">
    <citation type="journal article" date="2005" name="J. Biol. Chem.">
        <title>The putidaredoxin reductase-putidaredoxin electron transfer complex: theoretical and experimental studies.</title>
        <authorList>
            <person name="Kuznetsov V.Y."/>
            <person name="Blair E."/>
            <person name="Farmer P.J."/>
            <person name="Poulos T.L."/>
            <person name="Pifferitti A."/>
            <person name="Sevrioukova I.F."/>
        </authorList>
    </citation>
    <scope>INTERACTION WITH PUTIDAREDOXIN CAMB</scope>
</reference>
<reference key="7">
    <citation type="journal article" date="2004" name="J. Mol. Biol.">
        <title>Crystal structure of putidaredoxin reductase from Pseudomonas putida, the final structural component of the cytochrome P450cam monooxygenase.</title>
        <authorList>
            <person name="Sevrioukova I.F."/>
            <person name="Li H."/>
            <person name="Poulos T.L."/>
        </authorList>
    </citation>
    <scope>X-RAY CRYSTALLOGRAPHY (1.9 ANGSTROMS) IN COMPLEX WITH FAD</scope>
    <scope>COFACTOR</scope>
    <scope>SUBUNIT</scope>
</reference>
<reference key="8">
    <citation type="journal article" date="2010" name="J. Biol. Chem.">
        <title>Crystal structure of the putidaredoxin reductase x putidaredoxin electron transfer complex.</title>
        <authorList>
            <person name="Sevrioukova I.F."/>
            <person name="Poulos T.L."/>
            <person name="Churbanova I.Y."/>
        </authorList>
    </citation>
    <scope>X-RAY CRYSTALLOGRAPHY (2.6 ANGSTROMS) IN COMPLEX WITH PUTIDAREDOXIN CAMB AND FAD</scope>
    <scope>COFACTOR</scope>
</reference>
<feature type="chain" id="PRO_0000167646" description="Putidaredoxin reductase CamA">
    <location>
        <begin position="1"/>
        <end position="422"/>
    </location>
</feature>
<feature type="binding site" evidence="3 4 10 11 12">
    <location>
        <position position="15"/>
    </location>
    <ligand>
        <name>FAD</name>
        <dbReference type="ChEBI" id="CHEBI:57692"/>
    </ligand>
</feature>
<feature type="binding site" evidence="3 4 10 11 12">
    <location>
        <position position="37"/>
    </location>
    <ligand>
        <name>FAD</name>
        <dbReference type="ChEBI" id="CHEBI:57692"/>
    </ligand>
</feature>
<feature type="binding site" evidence="3 4 10 11 12">
    <location>
        <position position="50"/>
    </location>
    <ligand>
        <name>FAD</name>
        <dbReference type="ChEBI" id="CHEBI:57692"/>
    </ligand>
</feature>
<feature type="binding site" evidence="3 4 10 11 12">
    <location>
        <position position="83"/>
    </location>
    <ligand>
        <name>FAD</name>
        <dbReference type="ChEBI" id="CHEBI:57692"/>
    </ligand>
</feature>
<feature type="binding site" evidence="3 4 10 12">
    <location>
        <position position="134"/>
    </location>
    <ligand>
        <name>FAD</name>
        <dbReference type="ChEBI" id="CHEBI:57692"/>
    </ligand>
</feature>
<feature type="binding site" evidence="1">
    <location>
        <begin position="156"/>
        <end position="165"/>
    </location>
    <ligand>
        <name>NAD(+)</name>
        <dbReference type="ChEBI" id="CHEBI:57540"/>
    </ligand>
</feature>
<feature type="binding site" evidence="3 4 10 12">
    <location>
        <position position="284"/>
    </location>
    <ligand>
        <name>FAD</name>
        <dbReference type="ChEBI" id="CHEBI:57692"/>
    </ligand>
</feature>
<feature type="binding site" evidence="3 4 10 12">
    <location>
        <position position="302"/>
    </location>
    <ligand>
        <name>FAD</name>
        <dbReference type="ChEBI" id="CHEBI:57692"/>
    </ligand>
</feature>
<feature type="strand" evidence="13">
    <location>
        <begin position="6"/>
        <end position="10"/>
    </location>
</feature>
<feature type="helix" evidence="13">
    <location>
        <begin position="14"/>
        <end position="25"/>
    </location>
</feature>
<feature type="strand" evidence="13">
    <location>
        <begin position="30"/>
        <end position="35"/>
    </location>
</feature>
<feature type="helix" evidence="13">
    <location>
        <begin position="46"/>
        <end position="48"/>
    </location>
</feature>
<feature type="turn" evidence="13">
    <location>
        <begin position="49"/>
        <end position="55"/>
    </location>
</feature>
<feature type="helix" evidence="13">
    <location>
        <begin position="60"/>
        <end position="62"/>
    </location>
</feature>
<feature type="strand" evidence="13">
    <location>
        <begin position="63"/>
        <end position="65"/>
    </location>
</feature>
<feature type="helix" evidence="13">
    <location>
        <begin position="67"/>
        <end position="72"/>
    </location>
</feature>
<feature type="strand" evidence="13">
    <location>
        <begin position="75"/>
        <end position="78"/>
    </location>
</feature>
<feature type="strand" evidence="13">
    <location>
        <begin position="83"/>
        <end position="87"/>
    </location>
</feature>
<feature type="turn" evidence="13">
    <location>
        <begin position="88"/>
        <end position="91"/>
    </location>
</feature>
<feature type="strand" evidence="13">
    <location>
        <begin position="92"/>
        <end position="95"/>
    </location>
</feature>
<feature type="strand" evidence="13">
    <location>
        <begin position="100"/>
        <end position="102"/>
    </location>
</feature>
<feature type="strand" evidence="13">
    <location>
        <begin position="104"/>
        <end position="108"/>
    </location>
</feature>
<feature type="strand" evidence="13">
    <location>
        <begin position="112"/>
        <end position="114"/>
    </location>
</feature>
<feature type="helix" evidence="13">
    <location>
        <begin position="118"/>
        <end position="120"/>
    </location>
</feature>
<feature type="helix" evidence="13">
    <location>
        <begin position="123"/>
        <end position="126"/>
    </location>
</feature>
<feature type="strand" evidence="13">
    <location>
        <begin position="130"/>
        <end position="135"/>
    </location>
</feature>
<feature type="helix" evidence="13">
    <location>
        <begin position="136"/>
        <end position="144"/>
    </location>
</feature>
<feature type="strand" evidence="13">
    <location>
        <begin position="151"/>
        <end position="155"/>
    </location>
</feature>
<feature type="helix" evidence="13">
    <location>
        <begin position="159"/>
        <end position="170"/>
    </location>
</feature>
<feature type="strand" evidence="13">
    <location>
        <begin position="174"/>
        <end position="178"/>
    </location>
</feature>
<feature type="strand" evidence="13">
    <location>
        <begin position="180"/>
        <end position="183"/>
    </location>
</feature>
<feature type="turn" evidence="13">
    <location>
        <begin position="184"/>
        <end position="188"/>
    </location>
</feature>
<feature type="helix" evidence="13">
    <location>
        <begin position="191"/>
        <end position="204"/>
    </location>
</feature>
<feature type="strand" evidence="13">
    <location>
        <begin position="207"/>
        <end position="209"/>
    </location>
</feature>
<feature type="strand" evidence="13">
    <location>
        <begin position="214"/>
        <end position="219"/>
    </location>
</feature>
<feature type="turn" evidence="13">
    <location>
        <begin position="221"/>
        <end position="223"/>
    </location>
</feature>
<feature type="strand" evidence="13">
    <location>
        <begin position="226"/>
        <end position="231"/>
    </location>
</feature>
<feature type="strand" evidence="13">
    <location>
        <begin position="236"/>
        <end position="238"/>
    </location>
</feature>
<feature type="strand" evidence="13">
    <location>
        <begin position="240"/>
        <end position="244"/>
    </location>
</feature>
<feature type="strand" evidence="13">
    <location>
        <begin position="248"/>
        <end position="250"/>
    </location>
</feature>
<feature type="helix" evidence="13">
    <location>
        <begin position="253"/>
        <end position="257"/>
    </location>
</feature>
<feature type="strand" evidence="13">
    <location>
        <begin position="262"/>
        <end position="267"/>
    </location>
</feature>
<feature type="strand" evidence="13">
    <location>
        <begin position="279"/>
        <end position="281"/>
    </location>
</feature>
<feature type="helix" evidence="13">
    <location>
        <begin position="283"/>
        <end position="285"/>
    </location>
</feature>
<feature type="strand" evidence="13">
    <location>
        <begin position="286"/>
        <end position="290"/>
    </location>
</feature>
<feature type="turn" evidence="13">
    <location>
        <begin position="291"/>
        <end position="294"/>
    </location>
</feature>
<feature type="strand" evidence="13">
    <location>
        <begin position="295"/>
        <end position="298"/>
    </location>
</feature>
<feature type="helix" evidence="13">
    <location>
        <begin position="302"/>
        <end position="316"/>
    </location>
</feature>
<feature type="strand" evidence="13">
    <location>
        <begin position="328"/>
        <end position="333"/>
    </location>
</feature>
<feature type="strand" evidence="13">
    <location>
        <begin position="336"/>
        <end position="342"/>
    </location>
</feature>
<feature type="strand" evidence="13">
    <location>
        <begin position="348"/>
        <end position="355"/>
    </location>
</feature>
<feature type="turn" evidence="13">
    <location>
        <begin position="356"/>
        <end position="359"/>
    </location>
</feature>
<feature type="strand" evidence="13">
    <location>
        <begin position="360"/>
        <end position="367"/>
    </location>
</feature>
<feature type="strand" evidence="13">
    <location>
        <begin position="370"/>
        <end position="378"/>
    </location>
</feature>
<feature type="helix" evidence="13">
    <location>
        <begin position="380"/>
        <end position="391"/>
    </location>
</feature>
<feature type="helix" evidence="13">
    <location>
        <begin position="398"/>
        <end position="401"/>
    </location>
</feature>
<feature type="helix" evidence="13">
    <location>
        <begin position="408"/>
        <end position="421"/>
    </location>
</feature>
<dbReference type="EC" id="1.18.1.5" evidence="2"/>
<dbReference type="EMBL" id="D00528">
    <property type="protein sequence ID" value="BAA00413.1"/>
    <property type="molecule type" value="Genomic_DNA"/>
</dbReference>
<dbReference type="EMBL" id="J05406">
    <property type="protein sequence ID" value="AAA25758.1"/>
    <property type="molecule type" value="Genomic_DNA"/>
</dbReference>
<dbReference type="EMBL" id="M12546">
    <property type="protein sequence ID" value="AAA25761.1"/>
    <property type="molecule type" value="Genomic_DNA"/>
</dbReference>
<dbReference type="PIR" id="JX0078">
    <property type="entry name" value="JX0078"/>
</dbReference>
<dbReference type="PDB" id="1Q1R">
    <property type="method" value="X-ray"/>
    <property type="resolution" value="1.91 A"/>
    <property type="chains" value="A/B=1-422"/>
</dbReference>
<dbReference type="PDB" id="1Q1W">
    <property type="method" value="X-ray"/>
    <property type="resolution" value="2.60 A"/>
    <property type="chains" value="A/B=1-422"/>
</dbReference>
<dbReference type="PDB" id="3LB8">
    <property type="method" value="X-ray"/>
    <property type="resolution" value="2.60 A"/>
    <property type="chains" value="A/B=2-422"/>
</dbReference>
<dbReference type="PDBsum" id="1Q1R"/>
<dbReference type="PDBsum" id="1Q1W"/>
<dbReference type="PDBsum" id="3LB8"/>
<dbReference type="SMR" id="P16640"/>
<dbReference type="DrugBank" id="DB03147">
    <property type="generic name" value="Flavin adenine dinucleotide"/>
</dbReference>
<dbReference type="KEGG" id="ag:AAA25758"/>
<dbReference type="BioCyc" id="MetaCyc:MONOMER-3501"/>
<dbReference type="BRENDA" id="1.18.1.5">
    <property type="organism ID" value="5092"/>
</dbReference>
<dbReference type="UniPathway" id="UPA00719"/>
<dbReference type="EvolutionaryTrace" id="P16640"/>
<dbReference type="GO" id="GO:0005737">
    <property type="term" value="C:cytoplasm"/>
    <property type="evidence" value="ECO:0007669"/>
    <property type="project" value="TreeGrafter"/>
</dbReference>
<dbReference type="GO" id="GO:0050660">
    <property type="term" value="F:flavin adenine dinucleotide binding"/>
    <property type="evidence" value="ECO:0000314"/>
    <property type="project" value="UniProtKB"/>
</dbReference>
<dbReference type="GO" id="GO:0016651">
    <property type="term" value="F:oxidoreductase activity, acting on NAD(P)H"/>
    <property type="evidence" value="ECO:0007669"/>
    <property type="project" value="TreeGrafter"/>
</dbReference>
<dbReference type="GO" id="GO:0019383">
    <property type="term" value="P:(+)-camphor catabolic process"/>
    <property type="evidence" value="ECO:0007669"/>
    <property type="project" value="UniProtKB-UniPathway"/>
</dbReference>
<dbReference type="FunFam" id="3.50.50.60:FF:000088">
    <property type="entry name" value="3-phenylpropionate/cinnamic acid dioxygenase ferredoxin--NAD(+) reductase component"/>
    <property type="match status" value="1"/>
</dbReference>
<dbReference type="FunFam" id="3.30.390.30:FF:000016">
    <property type="entry name" value="Putidaredoxin reductase CamA"/>
    <property type="match status" value="1"/>
</dbReference>
<dbReference type="Gene3D" id="3.30.390.30">
    <property type="match status" value="1"/>
</dbReference>
<dbReference type="Gene3D" id="3.50.50.60">
    <property type="entry name" value="FAD/NAD(P)-binding domain"/>
    <property type="match status" value="2"/>
</dbReference>
<dbReference type="InterPro" id="IPR050446">
    <property type="entry name" value="FAD-oxidoreductase/Apoptosis"/>
</dbReference>
<dbReference type="InterPro" id="IPR036188">
    <property type="entry name" value="FAD/NAD-bd_sf"/>
</dbReference>
<dbReference type="InterPro" id="IPR023753">
    <property type="entry name" value="FAD/NAD-binding_dom"/>
</dbReference>
<dbReference type="InterPro" id="IPR016156">
    <property type="entry name" value="FAD/NAD-linked_Rdtase_dimer_sf"/>
</dbReference>
<dbReference type="InterPro" id="IPR028202">
    <property type="entry name" value="Reductase_C"/>
</dbReference>
<dbReference type="PANTHER" id="PTHR43557">
    <property type="entry name" value="APOPTOSIS-INDUCING FACTOR 1"/>
    <property type="match status" value="1"/>
</dbReference>
<dbReference type="PANTHER" id="PTHR43557:SF2">
    <property type="entry name" value="RIESKE DOMAIN-CONTAINING PROTEIN-RELATED"/>
    <property type="match status" value="1"/>
</dbReference>
<dbReference type="Pfam" id="PF07992">
    <property type="entry name" value="Pyr_redox_2"/>
    <property type="match status" value="1"/>
</dbReference>
<dbReference type="Pfam" id="PF14759">
    <property type="entry name" value="Reductase_C"/>
    <property type="match status" value="1"/>
</dbReference>
<dbReference type="PRINTS" id="PR00368">
    <property type="entry name" value="FADPNR"/>
</dbReference>
<dbReference type="PRINTS" id="PR00411">
    <property type="entry name" value="PNDRDTASEI"/>
</dbReference>
<dbReference type="SUPFAM" id="SSF51905">
    <property type="entry name" value="FAD/NAD(P)-binding domain"/>
    <property type="match status" value="1"/>
</dbReference>
<dbReference type="SUPFAM" id="SSF55424">
    <property type="entry name" value="FAD/NAD-linked reductases, dimerisation (C-terminal) domain"/>
    <property type="match status" value="1"/>
</dbReference>